<sequence length="293" mass="32085">MTDSTRSLRNCLAPAKLNLFLHITGRRPNGYHDLQSVFQLLNWGDTLHFTRRDDGRVARVTDVPGVPEESDLVVRAANLLKAHTDTAHGVDIEIDKILPMGAGLGGGSSDAATTLLALNRLWQLDLPRAELQSLAVKLGADVPFFIFGKNAFAEGIGEELAEVELPTRWFLVVTPRVHVPTAEIFSDELLTRDTKPVTIADFLAQQTSDAEWPDSFGRNDMQEVVTRKYAEVAQVVKWLYDVTPARMTGSGASVFAAFHSKHEAEAAKAKLPASWNGAVAESLNEHPLFAFAS</sequence>
<proteinExistence type="inferred from homology"/>
<protein>
    <recommendedName>
        <fullName evidence="1">4-diphosphocytidyl-2-C-methyl-D-erythritol kinase</fullName>
        <shortName evidence="1">CMK</shortName>
        <ecNumber evidence="1">2.7.1.148</ecNumber>
    </recommendedName>
    <alternativeName>
        <fullName evidence="1">4-(cytidine-5'-diphospho)-2-C-methyl-D-erythritol kinase</fullName>
    </alternativeName>
</protein>
<keyword id="KW-0067">ATP-binding</keyword>
<keyword id="KW-0414">Isoprene biosynthesis</keyword>
<keyword id="KW-0418">Kinase</keyword>
<keyword id="KW-0547">Nucleotide-binding</keyword>
<keyword id="KW-0808">Transferase</keyword>
<comment type="function">
    <text evidence="1">Catalyzes the phosphorylation of the position 2 hydroxy group of 4-diphosphocytidyl-2C-methyl-D-erythritol.</text>
</comment>
<comment type="catalytic activity">
    <reaction evidence="1">
        <text>4-CDP-2-C-methyl-D-erythritol + ATP = 4-CDP-2-C-methyl-D-erythritol 2-phosphate + ADP + H(+)</text>
        <dbReference type="Rhea" id="RHEA:18437"/>
        <dbReference type="ChEBI" id="CHEBI:15378"/>
        <dbReference type="ChEBI" id="CHEBI:30616"/>
        <dbReference type="ChEBI" id="CHEBI:57823"/>
        <dbReference type="ChEBI" id="CHEBI:57919"/>
        <dbReference type="ChEBI" id="CHEBI:456216"/>
        <dbReference type="EC" id="2.7.1.148"/>
    </reaction>
</comment>
<comment type="pathway">
    <text evidence="1">Isoprenoid biosynthesis; isopentenyl diphosphate biosynthesis via DXP pathway; isopentenyl diphosphate from 1-deoxy-D-xylulose 5-phosphate: step 3/6.</text>
</comment>
<comment type="similarity">
    <text evidence="1">Belongs to the GHMP kinase family. IspE subfamily.</text>
</comment>
<name>ISPE_BURCH</name>
<feature type="chain" id="PRO_1000007818" description="4-diphosphocytidyl-2-C-methyl-D-erythritol kinase">
    <location>
        <begin position="1"/>
        <end position="293"/>
    </location>
</feature>
<feature type="active site" evidence="1">
    <location>
        <position position="16"/>
    </location>
</feature>
<feature type="active site" evidence="1">
    <location>
        <position position="141"/>
    </location>
</feature>
<feature type="binding site" evidence="1">
    <location>
        <begin position="99"/>
        <end position="109"/>
    </location>
    <ligand>
        <name>ATP</name>
        <dbReference type="ChEBI" id="CHEBI:30616"/>
    </ligand>
</feature>
<dbReference type="EC" id="2.7.1.148" evidence="1"/>
<dbReference type="EMBL" id="CP000458">
    <property type="protein sequence ID" value="ABK09551.1"/>
    <property type="molecule type" value="Genomic_DNA"/>
</dbReference>
<dbReference type="RefSeq" id="WP_011546246.1">
    <property type="nucleotide sequence ID" value="NC_008542.1"/>
</dbReference>
<dbReference type="SMR" id="A0KAM4"/>
<dbReference type="KEGG" id="bch:Bcen2424_2801"/>
<dbReference type="HOGENOM" id="CLU_053057_3_0_4"/>
<dbReference type="UniPathway" id="UPA00056">
    <property type="reaction ID" value="UER00094"/>
</dbReference>
<dbReference type="GO" id="GO:0050515">
    <property type="term" value="F:4-(cytidine 5'-diphospho)-2-C-methyl-D-erythritol kinase activity"/>
    <property type="evidence" value="ECO:0007669"/>
    <property type="project" value="UniProtKB-UniRule"/>
</dbReference>
<dbReference type="GO" id="GO:0005524">
    <property type="term" value="F:ATP binding"/>
    <property type="evidence" value="ECO:0007669"/>
    <property type="project" value="UniProtKB-UniRule"/>
</dbReference>
<dbReference type="GO" id="GO:0019288">
    <property type="term" value="P:isopentenyl diphosphate biosynthetic process, methylerythritol 4-phosphate pathway"/>
    <property type="evidence" value="ECO:0007669"/>
    <property type="project" value="UniProtKB-UniRule"/>
</dbReference>
<dbReference type="GO" id="GO:0016114">
    <property type="term" value="P:terpenoid biosynthetic process"/>
    <property type="evidence" value="ECO:0007669"/>
    <property type="project" value="InterPro"/>
</dbReference>
<dbReference type="Gene3D" id="3.30.230.10">
    <property type="match status" value="1"/>
</dbReference>
<dbReference type="Gene3D" id="3.30.70.890">
    <property type="entry name" value="GHMP kinase, C-terminal domain"/>
    <property type="match status" value="1"/>
</dbReference>
<dbReference type="HAMAP" id="MF_00061">
    <property type="entry name" value="IspE"/>
    <property type="match status" value="1"/>
</dbReference>
<dbReference type="InterPro" id="IPR013750">
    <property type="entry name" value="GHMP_kinase_C_dom"/>
</dbReference>
<dbReference type="InterPro" id="IPR036554">
    <property type="entry name" value="GHMP_kinase_C_sf"/>
</dbReference>
<dbReference type="InterPro" id="IPR006204">
    <property type="entry name" value="GHMP_kinase_N_dom"/>
</dbReference>
<dbReference type="InterPro" id="IPR004424">
    <property type="entry name" value="IspE"/>
</dbReference>
<dbReference type="InterPro" id="IPR020568">
    <property type="entry name" value="Ribosomal_Su5_D2-typ_SF"/>
</dbReference>
<dbReference type="InterPro" id="IPR014721">
    <property type="entry name" value="Ribsml_uS5_D2-typ_fold_subgr"/>
</dbReference>
<dbReference type="NCBIfam" id="TIGR00154">
    <property type="entry name" value="ispE"/>
    <property type="match status" value="1"/>
</dbReference>
<dbReference type="NCBIfam" id="NF011202">
    <property type="entry name" value="PRK14608.1"/>
    <property type="match status" value="1"/>
</dbReference>
<dbReference type="PANTHER" id="PTHR43527">
    <property type="entry name" value="4-DIPHOSPHOCYTIDYL-2-C-METHYL-D-ERYTHRITOL KINASE, CHLOROPLASTIC"/>
    <property type="match status" value="1"/>
</dbReference>
<dbReference type="PANTHER" id="PTHR43527:SF2">
    <property type="entry name" value="4-DIPHOSPHOCYTIDYL-2-C-METHYL-D-ERYTHRITOL KINASE, CHLOROPLASTIC"/>
    <property type="match status" value="1"/>
</dbReference>
<dbReference type="Pfam" id="PF08544">
    <property type="entry name" value="GHMP_kinases_C"/>
    <property type="match status" value="1"/>
</dbReference>
<dbReference type="Pfam" id="PF00288">
    <property type="entry name" value="GHMP_kinases_N"/>
    <property type="match status" value="1"/>
</dbReference>
<dbReference type="PIRSF" id="PIRSF010376">
    <property type="entry name" value="IspE"/>
    <property type="match status" value="1"/>
</dbReference>
<dbReference type="SUPFAM" id="SSF55060">
    <property type="entry name" value="GHMP Kinase, C-terminal domain"/>
    <property type="match status" value="1"/>
</dbReference>
<dbReference type="SUPFAM" id="SSF54211">
    <property type="entry name" value="Ribosomal protein S5 domain 2-like"/>
    <property type="match status" value="1"/>
</dbReference>
<organism>
    <name type="scientific">Burkholderia cenocepacia (strain HI2424)</name>
    <dbReference type="NCBI Taxonomy" id="331272"/>
    <lineage>
        <taxon>Bacteria</taxon>
        <taxon>Pseudomonadati</taxon>
        <taxon>Pseudomonadota</taxon>
        <taxon>Betaproteobacteria</taxon>
        <taxon>Burkholderiales</taxon>
        <taxon>Burkholderiaceae</taxon>
        <taxon>Burkholderia</taxon>
        <taxon>Burkholderia cepacia complex</taxon>
    </lineage>
</organism>
<reference key="1">
    <citation type="submission" date="2006-08" db="EMBL/GenBank/DDBJ databases">
        <title>Complete sequence of chromosome 1 of Burkholderia cenocepacia HI2424.</title>
        <authorList>
            <person name="Copeland A."/>
            <person name="Lucas S."/>
            <person name="Lapidus A."/>
            <person name="Barry K."/>
            <person name="Detter J.C."/>
            <person name="Glavina del Rio T."/>
            <person name="Hammon N."/>
            <person name="Israni S."/>
            <person name="Pitluck S."/>
            <person name="Chain P."/>
            <person name="Malfatti S."/>
            <person name="Shin M."/>
            <person name="Vergez L."/>
            <person name="Schmutz J."/>
            <person name="Larimer F."/>
            <person name="Land M."/>
            <person name="Hauser L."/>
            <person name="Kyrpides N."/>
            <person name="Kim E."/>
            <person name="LiPuma J.J."/>
            <person name="Gonzalez C.F."/>
            <person name="Konstantinidis K."/>
            <person name="Tiedje J.M."/>
            <person name="Richardson P."/>
        </authorList>
    </citation>
    <scope>NUCLEOTIDE SEQUENCE [LARGE SCALE GENOMIC DNA]</scope>
    <source>
        <strain>HI2424</strain>
    </source>
</reference>
<evidence type="ECO:0000255" key="1">
    <source>
        <dbReference type="HAMAP-Rule" id="MF_00061"/>
    </source>
</evidence>
<accession>A0KAM4</accession>
<gene>
    <name evidence="1" type="primary">ispE</name>
    <name type="ordered locus">Bcen2424_2801</name>
</gene>